<evidence type="ECO:0000255" key="1">
    <source>
        <dbReference type="HAMAP-Rule" id="MF_00083"/>
    </source>
</evidence>
<sequence length="193" mass="21006">MSALRLIVGLGNPGPEHAQTRHNAGFRFVDALIERSGARWALDSKLFGETAKVEVAGQPVWLLKPATFMNLSGKSITAALRFWKIEPEHLLVAHDELDLAPGTARLKFDGGHGGQNGLRDTIRLLGHGKFHRLRVGIGHPGHKDRVVPWVLGRAGREDDAAIGAAVDAAIDVLPLAMEGNFNEAMKRLHTEKK</sequence>
<gene>
    <name evidence="1" type="primary">pth</name>
    <name type="ordered locus">XCV0982</name>
</gene>
<protein>
    <recommendedName>
        <fullName evidence="1">Peptidyl-tRNA hydrolase</fullName>
        <shortName evidence="1">Pth</shortName>
        <ecNumber evidence="1">3.1.1.29</ecNumber>
    </recommendedName>
</protein>
<proteinExistence type="inferred from homology"/>
<dbReference type="EC" id="3.1.1.29" evidence="1"/>
<dbReference type="EMBL" id="AM039952">
    <property type="protein sequence ID" value="CAJ22613.1"/>
    <property type="molecule type" value="Genomic_DNA"/>
</dbReference>
<dbReference type="RefSeq" id="WP_011346535.1">
    <property type="nucleotide sequence ID" value="NZ_CP017190.1"/>
</dbReference>
<dbReference type="SMR" id="Q3BX00"/>
<dbReference type="STRING" id="456327.BJD11_17845"/>
<dbReference type="KEGG" id="xcv:XCV0982"/>
<dbReference type="eggNOG" id="COG0193">
    <property type="taxonomic scope" value="Bacteria"/>
</dbReference>
<dbReference type="HOGENOM" id="CLU_062456_3_1_6"/>
<dbReference type="Proteomes" id="UP000007069">
    <property type="component" value="Chromosome"/>
</dbReference>
<dbReference type="GO" id="GO:0005737">
    <property type="term" value="C:cytoplasm"/>
    <property type="evidence" value="ECO:0007669"/>
    <property type="project" value="UniProtKB-SubCell"/>
</dbReference>
<dbReference type="GO" id="GO:0004045">
    <property type="term" value="F:peptidyl-tRNA hydrolase activity"/>
    <property type="evidence" value="ECO:0007669"/>
    <property type="project" value="UniProtKB-UniRule"/>
</dbReference>
<dbReference type="GO" id="GO:0000049">
    <property type="term" value="F:tRNA binding"/>
    <property type="evidence" value="ECO:0007669"/>
    <property type="project" value="UniProtKB-UniRule"/>
</dbReference>
<dbReference type="GO" id="GO:0006515">
    <property type="term" value="P:protein quality control for misfolded or incompletely synthesized proteins"/>
    <property type="evidence" value="ECO:0007669"/>
    <property type="project" value="UniProtKB-UniRule"/>
</dbReference>
<dbReference type="GO" id="GO:0072344">
    <property type="term" value="P:rescue of stalled ribosome"/>
    <property type="evidence" value="ECO:0007669"/>
    <property type="project" value="UniProtKB-UniRule"/>
</dbReference>
<dbReference type="CDD" id="cd00462">
    <property type="entry name" value="PTH"/>
    <property type="match status" value="1"/>
</dbReference>
<dbReference type="FunFam" id="3.40.50.1470:FF:000001">
    <property type="entry name" value="Peptidyl-tRNA hydrolase"/>
    <property type="match status" value="1"/>
</dbReference>
<dbReference type="Gene3D" id="3.40.50.1470">
    <property type="entry name" value="Peptidyl-tRNA hydrolase"/>
    <property type="match status" value="1"/>
</dbReference>
<dbReference type="HAMAP" id="MF_00083">
    <property type="entry name" value="Pept_tRNA_hydro_bact"/>
    <property type="match status" value="1"/>
</dbReference>
<dbReference type="InterPro" id="IPR001328">
    <property type="entry name" value="Pept_tRNA_hydro"/>
</dbReference>
<dbReference type="InterPro" id="IPR018171">
    <property type="entry name" value="Pept_tRNA_hydro_CS"/>
</dbReference>
<dbReference type="InterPro" id="IPR036416">
    <property type="entry name" value="Pept_tRNA_hydro_sf"/>
</dbReference>
<dbReference type="NCBIfam" id="TIGR00447">
    <property type="entry name" value="pth"/>
    <property type="match status" value="1"/>
</dbReference>
<dbReference type="PANTHER" id="PTHR17224">
    <property type="entry name" value="PEPTIDYL-TRNA HYDROLASE"/>
    <property type="match status" value="1"/>
</dbReference>
<dbReference type="PANTHER" id="PTHR17224:SF1">
    <property type="entry name" value="PEPTIDYL-TRNA HYDROLASE"/>
    <property type="match status" value="1"/>
</dbReference>
<dbReference type="Pfam" id="PF01195">
    <property type="entry name" value="Pept_tRNA_hydro"/>
    <property type="match status" value="1"/>
</dbReference>
<dbReference type="SUPFAM" id="SSF53178">
    <property type="entry name" value="Peptidyl-tRNA hydrolase-like"/>
    <property type="match status" value="1"/>
</dbReference>
<dbReference type="PROSITE" id="PS01195">
    <property type="entry name" value="PEPT_TRNA_HYDROL_1"/>
    <property type="match status" value="1"/>
</dbReference>
<name>PTH_XANE5</name>
<reference key="1">
    <citation type="journal article" date="2005" name="J. Bacteriol.">
        <title>Insights into genome plasticity and pathogenicity of the plant pathogenic Bacterium Xanthomonas campestris pv. vesicatoria revealed by the complete genome sequence.</title>
        <authorList>
            <person name="Thieme F."/>
            <person name="Koebnik R."/>
            <person name="Bekel T."/>
            <person name="Berger C."/>
            <person name="Boch J."/>
            <person name="Buettner D."/>
            <person name="Caldana C."/>
            <person name="Gaigalat L."/>
            <person name="Goesmann A."/>
            <person name="Kay S."/>
            <person name="Kirchner O."/>
            <person name="Lanz C."/>
            <person name="Linke B."/>
            <person name="McHardy A.C."/>
            <person name="Meyer F."/>
            <person name="Mittenhuber G."/>
            <person name="Nies D.H."/>
            <person name="Niesbach-Kloesgen U."/>
            <person name="Patschkowski T."/>
            <person name="Rueckert C."/>
            <person name="Rupp O."/>
            <person name="Schneiker S."/>
            <person name="Schuster S.C."/>
            <person name="Vorhoelter F.J."/>
            <person name="Weber E."/>
            <person name="Puehler A."/>
            <person name="Bonas U."/>
            <person name="Bartels D."/>
            <person name="Kaiser O."/>
        </authorList>
    </citation>
    <scope>NUCLEOTIDE SEQUENCE [LARGE SCALE GENOMIC DNA]</scope>
    <source>
        <strain>85-10</strain>
    </source>
</reference>
<comment type="function">
    <text evidence="1">Hydrolyzes ribosome-free peptidyl-tRNAs (with 1 or more amino acids incorporated), which drop off the ribosome during protein synthesis, or as a result of ribosome stalling.</text>
</comment>
<comment type="function">
    <text evidence="1">Catalyzes the release of premature peptidyl moieties from peptidyl-tRNA molecules trapped in stalled 50S ribosomal subunits, and thus maintains levels of free tRNAs and 50S ribosomes.</text>
</comment>
<comment type="catalytic activity">
    <reaction evidence="1">
        <text>an N-acyl-L-alpha-aminoacyl-tRNA + H2O = an N-acyl-L-amino acid + a tRNA + H(+)</text>
        <dbReference type="Rhea" id="RHEA:54448"/>
        <dbReference type="Rhea" id="RHEA-COMP:10123"/>
        <dbReference type="Rhea" id="RHEA-COMP:13883"/>
        <dbReference type="ChEBI" id="CHEBI:15377"/>
        <dbReference type="ChEBI" id="CHEBI:15378"/>
        <dbReference type="ChEBI" id="CHEBI:59874"/>
        <dbReference type="ChEBI" id="CHEBI:78442"/>
        <dbReference type="ChEBI" id="CHEBI:138191"/>
        <dbReference type="EC" id="3.1.1.29"/>
    </reaction>
</comment>
<comment type="subunit">
    <text evidence="1">Monomer.</text>
</comment>
<comment type="subcellular location">
    <subcellularLocation>
        <location evidence="1">Cytoplasm</location>
    </subcellularLocation>
</comment>
<comment type="similarity">
    <text evidence="1">Belongs to the PTH family.</text>
</comment>
<feature type="chain" id="PRO_0000264137" description="Peptidyl-tRNA hydrolase">
    <location>
        <begin position="1"/>
        <end position="193"/>
    </location>
</feature>
<feature type="active site" description="Proton acceptor" evidence="1">
    <location>
        <position position="22"/>
    </location>
</feature>
<feature type="binding site" evidence="1">
    <location>
        <position position="17"/>
    </location>
    <ligand>
        <name>tRNA</name>
        <dbReference type="ChEBI" id="CHEBI:17843"/>
    </ligand>
</feature>
<feature type="binding site" evidence="1">
    <location>
        <position position="68"/>
    </location>
    <ligand>
        <name>tRNA</name>
        <dbReference type="ChEBI" id="CHEBI:17843"/>
    </ligand>
</feature>
<feature type="binding site" evidence="1">
    <location>
        <position position="70"/>
    </location>
    <ligand>
        <name>tRNA</name>
        <dbReference type="ChEBI" id="CHEBI:17843"/>
    </ligand>
</feature>
<feature type="binding site" evidence="1">
    <location>
        <position position="116"/>
    </location>
    <ligand>
        <name>tRNA</name>
        <dbReference type="ChEBI" id="CHEBI:17843"/>
    </ligand>
</feature>
<feature type="site" description="Discriminates between blocked and unblocked aminoacyl-tRNA" evidence="1">
    <location>
        <position position="12"/>
    </location>
</feature>
<feature type="site" description="Stabilizes the basic form of H active site to accept a proton" evidence="1">
    <location>
        <position position="95"/>
    </location>
</feature>
<accession>Q3BX00</accession>
<keyword id="KW-0963">Cytoplasm</keyword>
<keyword id="KW-0378">Hydrolase</keyword>
<keyword id="KW-0694">RNA-binding</keyword>
<keyword id="KW-0820">tRNA-binding</keyword>
<organism>
    <name type="scientific">Xanthomonas euvesicatoria pv. vesicatoria (strain 85-10)</name>
    <name type="common">Xanthomonas campestris pv. vesicatoria</name>
    <dbReference type="NCBI Taxonomy" id="316273"/>
    <lineage>
        <taxon>Bacteria</taxon>
        <taxon>Pseudomonadati</taxon>
        <taxon>Pseudomonadota</taxon>
        <taxon>Gammaproteobacteria</taxon>
        <taxon>Lysobacterales</taxon>
        <taxon>Lysobacteraceae</taxon>
        <taxon>Xanthomonas</taxon>
    </lineage>
</organism>